<dbReference type="EMBL" id="CP000829">
    <property type="protein sequence ID" value="ACI60676.1"/>
    <property type="molecule type" value="Genomic_DNA"/>
</dbReference>
<dbReference type="SMR" id="B5XK14"/>
<dbReference type="KEGG" id="soz:Spy49_0340"/>
<dbReference type="HOGENOM" id="CLU_114845_0_0_9"/>
<dbReference type="Proteomes" id="UP000001039">
    <property type="component" value="Chromosome"/>
</dbReference>
<dbReference type="GO" id="GO:0010181">
    <property type="term" value="F:FMN binding"/>
    <property type="evidence" value="ECO:0007669"/>
    <property type="project" value="InterPro"/>
</dbReference>
<dbReference type="GO" id="GO:0036211">
    <property type="term" value="P:protein modification process"/>
    <property type="evidence" value="ECO:0007669"/>
    <property type="project" value="InterPro"/>
</dbReference>
<dbReference type="Gene3D" id="3.40.50.360">
    <property type="match status" value="1"/>
</dbReference>
<dbReference type="HAMAP" id="MF_00128">
    <property type="entry name" value="NrdI"/>
    <property type="match status" value="1"/>
</dbReference>
<dbReference type="InterPro" id="IPR029039">
    <property type="entry name" value="Flavoprotein-like_sf"/>
</dbReference>
<dbReference type="InterPro" id="IPR020852">
    <property type="entry name" value="RNR_Ib_NrdI_bac"/>
</dbReference>
<dbReference type="InterPro" id="IPR004465">
    <property type="entry name" value="RNR_NrdI"/>
</dbReference>
<dbReference type="NCBIfam" id="TIGR00333">
    <property type="entry name" value="nrdI"/>
    <property type="match status" value="1"/>
</dbReference>
<dbReference type="PANTHER" id="PTHR37297">
    <property type="entry name" value="PROTEIN NRDI"/>
    <property type="match status" value="1"/>
</dbReference>
<dbReference type="PANTHER" id="PTHR37297:SF1">
    <property type="entry name" value="PROTEIN NRDI"/>
    <property type="match status" value="1"/>
</dbReference>
<dbReference type="Pfam" id="PF07972">
    <property type="entry name" value="Flavodoxin_NdrI"/>
    <property type="match status" value="1"/>
</dbReference>
<dbReference type="PIRSF" id="PIRSF005087">
    <property type="entry name" value="NrdI"/>
    <property type="match status" value="1"/>
</dbReference>
<dbReference type="SUPFAM" id="SSF52218">
    <property type="entry name" value="Flavoproteins"/>
    <property type="match status" value="1"/>
</dbReference>
<protein>
    <recommendedName>
        <fullName evidence="1">Protein NrdI</fullName>
    </recommendedName>
</protein>
<gene>
    <name evidence="1" type="primary">nrdI</name>
    <name type="ordered locus">Spy49_0340</name>
</gene>
<name>NRDI_STRPZ</name>
<evidence type="ECO:0000255" key="1">
    <source>
        <dbReference type="HAMAP-Rule" id="MF_00128"/>
    </source>
</evidence>
<proteinExistence type="inferred from homology"/>
<feature type="chain" id="PRO_1000095636" description="Protein NrdI">
    <location>
        <begin position="1"/>
        <end position="162"/>
    </location>
</feature>
<reference key="1">
    <citation type="journal article" date="2008" name="J. Bacteriol.">
        <title>Genome sequence of a nephritogenic and highly transformable M49 strain of Streptococcus pyogenes.</title>
        <authorList>
            <person name="McShan W.M."/>
            <person name="Ferretti J.J."/>
            <person name="Karasawa T."/>
            <person name="Suvorov A.N."/>
            <person name="Lin S."/>
            <person name="Qin B."/>
            <person name="Jia H."/>
            <person name="Kenton S."/>
            <person name="Najar F."/>
            <person name="Wu H."/>
            <person name="Scott J."/>
            <person name="Roe B.A."/>
            <person name="Savic D.J."/>
        </authorList>
    </citation>
    <scope>NUCLEOTIDE SEQUENCE [LARGE SCALE GENOMIC DNA]</scope>
    <source>
        <strain>NZ131</strain>
    </source>
</reference>
<comment type="function">
    <text evidence="1">Probably involved in ribonucleotide reductase function.</text>
</comment>
<comment type="similarity">
    <text evidence="1">Belongs to the NrdI family.</text>
</comment>
<sequence length="162" mass="18114">MAELIIVYFSSKSNNTHRFVQKLGLPAQRIPVDNRPLEVSTHYLLIVPTYAAGGSDAKGAVPKQVIRFLNNPNNRKHCKGVISSGNTNFGDTFALAGPIISQKLQVPLLHQFELLGTATDVKKVQAIFARLKHHTHDKQKQTNNLITERTHPCHKPMRHTSH</sequence>
<accession>B5XK14</accession>
<organism>
    <name type="scientific">Streptococcus pyogenes serotype M49 (strain NZ131)</name>
    <dbReference type="NCBI Taxonomy" id="471876"/>
    <lineage>
        <taxon>Bacteria</taxon>
        <taxon>Bacillati</taxon>
        <taxon>Bacillota</taxon>
        <taxon>Bacilli</taxon>
        <taxon>Lactobacillales</taxon>
        <taxon>Streptococcaceae</taxon>
        <taxon>Streptococcus</taxon>
    </lineage>
</organism>